<gene>
    <name type="ORF">SPBP16F5.06</name>
</gene>
<keyword id="KW-0539">Nucleus</keyword>
<keyword id="KW-0597">Phosphoprotein</keyword>
<keyword id="KW-1185">Reference proteome</keyword>
<keyword id="KW-0694">RNA-binding</keyword>
<feature type="chain" id="PRO_0000310816" description="Uncharacterized RNA-binding protein P16F5.06">
    <location>
        <begin position="1"/>
        <end position="478"/>
    </location>
</feature>
<feature type="domain" description="RRM" evidence="1">
    <location>
        <begin position="5"/>
        <end position="85"/>
    </location>
</feature>
<feature type="modified residue" description="Phosphoserine" evidence="3">
    <location>
        <position position="207"/>
    </location>
</feature>
<feature type="modified residue" description="Phosphoserine" evidence="3">
    <location>
        <position position="308"/>
    </location>
</feature>
<comment type="subcellular location">
    <subcellularLocation>
        <location evidence="2">Nucleus</location>
        <location evidence="2">Nucleolus</location>
    </subcellularLocation>
</comment>
<name>YNW6_SCHPO</name>
<accession>Q9HFE6</accession>
<dbReference type="EMBL" id="CU329671">
    <property type="protein sequence ID" value="CAC08545.1"/>
    <property type="molecule type" value="Genomic_DNA"/>
</dbReference>
<dbReference type="SMR" id="Q9HFE6"/>
<dbReference type="FunCoup" id="Q9HFE6">
    <property type="interactions" value="47"/>
</dbReference>
<dbReference type="STRING" id="284812.Q9HFE6"/>
<dbReference type="iPTMnet" id="Q9HFE6"/>
<dbReference type="PaxDb" id="4896-SPBP16F5.06.1"/>
<dbReference type="EnsemblFungi" id="SPBP16F5.06.1">
    <property type="protein sequence ID" value="SPBP16F5.06.1:pep"/>
    <property type="gene ID" value="SPBP16F5.06"/>
</dbReference>
<dbReference type="KEGG" id="spo:2541269"/>
<dbReference type="PomBase" id="SPBP16F5.06"/>
<dbReference type="VEuPathDB" id="FungiDB:SPBP16F5.06"/>
<dbReference type="eggNOG" id="KOG4365">
    <property type="taxonomic scope" value="Eukaryota"/>
</dbReference>
<dbReference type="HOGENOM" id="CLU_687206_0_0_1"/>
<dbReference type="InParanoid" id="Q9HFE6"/>
<dbReference type="OMA" id="NCLQKLW"/>
<dbReference type="PhylomeDB" id="Q9HFE6"/>
<dbReference type="PRO" id="PR:Q9HFE6"/>
<dbReference type="Proteomes" id="UP000002485">
    <property type="component" value="Chromosome II"/>
</dbReference>
<dbReference type="GO" id="GO:0005730">
    <property type="term" value="C:nucleolus"/>
    <property type="evidence" value="ECO:0007005"/>
    <property type="project" value="PomBase"/>
</dbReference>
<dbReference type="GO" id="GO:0005634">
    <property type="term" value="C:nucleus"/>
    <property type="evidence" value="ECO:0007005"/>
    <property type="project" value="PomBase"/>
</dbReference>
<dbReference type="GO" id="GO:0003723">
    <property type="term" value="F:RNA binding"/>
    <property type="evidence" value="ECO:0000318"/>
    <property type="project" value="GO_Central"/>
</dbReference>
<dbReference type="GO" id="GO:0042254">
    <property type="term" value="P:ribosome biogenesis"/>
    <property type="evidence" value="ECO:0000250"/>
    <property type="project" value="PomBase"/>
</dbReference>
<dbReference type="CDD" id="cd12226">
    <property type="entry name" value="RRM_NOL8"/>
    <property type="match status" value="1"/>
</dbReference>
<dbReference type="FunFam" id="3.30.70.330:FF:000346">
    <property type="entry name" value="Nucleolar protein 8"/>
    <property type="match status" value="1"/>
</dbReference>
<dbReference type="Gene3D" id="3.30.70.330">
    <property type="match status" value="1"/>
</dbReference>
<dbReference type="InterPro" id="IPR034138">
    <property type="entry name" value="NOP8_RRM"/>
</dbReference>
<dbReference type="InterPro" id="IPR012677">
    <property type="entry name" value="Nucleotide-bd_a/b_plait_sf"/>
</dbReference>
<dbReference type="InterPro" id="IPR035979">
    <property type="entry name" value="RBD_domain_sf"/>
</dbReference>
<dbReference type="InterPro" id="IPR000504">
    <property type="entry name" value="RRM_dom"/>
</dbReference>
<dbReference type="PANTHER" id="PTHR48029">
    <property type="entry name" value="NUCLEOLAR PROTEIN 8"/>
    <property type="match status" value="1"/>
</dbReference>
<dbReference type="PANTHER" id="PTHR48029:SF1">
    <property type="entry name" value="NUCLEOLAR PROTEIN 8"/>
    <property type="match status" value="1"/>
</dbReference>
<dbReference type="Pfam" id="PF00076">
    <property type="entry name" value="RRM_1"/>
    <property type="match status" value="1"/>
</dbReference>
<dbReference type="SMART" id="SM00360">
    <property type="entry name" value="RRM"/>
    <property type="match status" value="1"/>
</dbReference>
<dbReference type="SUPFAM" id="SSF54928">
    <property type="entry name" value="RNA-binding domain, RBD"/>
    <property type="match status" value="1"/>
</dbReference>
<dbReference type="PROSITE" id="PS50102">
    <property type="entry name" value="RRM"/>
    <property type="match status" value="1"/>
</dbReference>
<evidence type="ECO:0000255" key="1">
    <source>
        <dbReference type="PROSITE-ProRule" id="PRU00176"/>
    </source>
</evidence>
<evidence type="ECO:0000269" key="2">
    <source>
    </source>
</evidence>
<evidence type="ECO:0000269" key="3">
    <source>
    </source>
</evidence>
<sequence>MELEKRIYVGGLSSSIESSDLESRFSRFGSVSNLEIINKSTPVGTIQRFAYLNFRTDEDKWQKCKSYLSNATFKGSKLRIEEARPYYLVKLQQEKKIADLQSTNNDEKNEDHSSKVDLEDPVFHGEIIVPGKHSKNMQVVTDSDVRKDPPRKGWKKGPYGRAIVVLRMYNKNTKKTRFFYPLGKNCLQKLWGRVETNMDNTTAFYDSDHDEYVSYGGKRASRDKIRMQAKLGIKASTQKDDNDFELLNNTTGEIEVTKELNEEQLDALRKKDKDTAASVLAELFGSENTEEIDTVSKTSGVLELDNDSTNNFQKEGLDEQDNLQKEESVHIDVPAEFEAFDERTAVVNVDNLKEMFSSNAQDTSKFSLFGNENGVGEESEMESEIDDRNYETMEEEADGETPLAIVKASSGTKGWPKMFTLPNPSSLFQPGNEDYTSREALESWWSENRLFLTRDYKRKRKDAVKRQRRAHEKRIRLV</sequence>
<reference key="1">
    <citation type="journal article" date="2002" name="Nature">
        <title>The genome sequence of Schizosaccharomyces pombe.</title>
        <authorList>
            <person name="Wood V."/>
            <person name="Gwilliam R."/>
            <person name="Rajandream M.A."/>
            <person name="Lyne M.H."/>
            <person name="Lyne R."/>
            <person name="Stewart A."/>
            <person name="Sgouros J.G."/>
            <person name="Peat N."/>
            <person name="Hayles J."/>
            <person name="Baker S.G."/>
            <person name="Basham D."/>
            <person name="Bowman S."/>
            <person name="Brooks K."/>
            <person name="Brown D."/>
            <person name="Brown S."/>
            <person name="Chillingworth T."/>
            <person name="Churcher C.M."/>
            <person name="Collins M."/>
            <person name="Connor R."/>
            <person name="Cronin A."/>
            <person name="Davis P."/>
            <person name="Feltwell T."/>
            <person name="Fraser A."/>
            <person name="Gentles S."/>
            <person name="Goble A."/>
            <person name="Hamlin N."/>
            <person name="Harris D.E."/>
            <person name="Hidalgo J."/>
            <person name="Hodgson G."/>
            <person name="Holroyd S."/>
            <person name="Hornsby T."/>
            <person name="Howarth S."/>
            <person name="Huckle E.J."/>
            <person name="Hunt S."/>
            <person name="Jagels K."/>
            <person name="James K.D."/>
            <person name="Jones L."/>
            <person name="Jones M."/>
            <person name="Leather S."/>
            <person name="McDonald S."/>
            <person name="McLean J."/>
            <person name="Mooney P."/>
            <person name="Moule S."/>
            <person name="Mungall K.L."/>
            <person name="Murphy L.D."/>
            <person name="Niblett D."/>
            <person name="Odell C."/>
            <person name="Oliver K."/>
            <person name="O'Neil S."/>
            <person name="Pearson D."/>
            <person name="Quail M.A."/>
            <person name="Rabbinowitsch E."/>
            <person name="Rutherford K.M."/>
            <person name="Rutter S."/>
            <person name="Saunders D."/>
            <person name="Seeger K."/>
            <person name="Sharp S."/>
            <person name="Skelton J."/>
            <person name="Simmonds M.N."/>
            <person name="Squares R."/>
            <person name="Squares S."/>
            <person name="Stevens K."/>
            <person name="Taylor K."/>
            <person name="Taylor R.G."/>
            <person name="Tivey A."/>
            <person name="Walsh S.V."/>
            <person name="Warren T."/>
            <person name="Whitehead S."/>
            <person name="Woodward J.R."/>
            <person name="Volckaert G."/>
            <person name="Aert R."/>
            <person name="Robben J."/>
            <person name="Grymonprez B."/>
            <person name="Weltjens I."/>
            <person name="Vanstreels E."/>
            <person name="Rieger M."/>
            <person name="Schaefer M."/>
            <person name="Mueller-Auer S."/>
            <person name="Gabel C."/>
            <person name="Fuchs M."/>
            <person name="Duesterhoeft A."/>
            <person name="Fritzc C."/>
            <person name="Holzer E."/>
            <person name="Moestl D."/>
            <person name="Hilbert H."/>
            <person name="Borzym K."/>
            <person name="Langer I."/>
            <person name="Beck A."/>
            <person name="Lehrach H."/>
            <person name="Reinhardt R."/>
            <person name="Pohl T.M."/>
            <person name="Eger P."/>
            <person name="Zimmermann W."/>
            <person name="Wedler H."/>
            <person name="Wambutt R."/>
            <person name="Purnelle B."/>
            <person name="Goffeau A."/>
            <person name="Cadieu E."/>
            <person name="Dreano S."/>
            <person name="Gloux S."/>
            <person name="Lelaure V."/>
            <person name="Mottier S."/>
            <person name="Galibert F."/>
            <person name="Aves S.J."/>
            <person name="Xiang Z."/>
            <person name="Hunt C."/>
            <person name="Moore K."/>
            <person name="Hurst S.M."/>
            <person name="Lucas M."/>
            <person name="Rochet M."/>
            <person name="Gaillardin C."/>
            <person name="Tallada V.A."/>
            <person name="Garzon A."/>
            <person name="Thode G."/>
            <person name="Daga R.R."/>
            <person name="Cruzado L."/>
            <person name="Jimenez J."/>
            <person name="Sanchez M."/>
            <person name="del Rey F."/>
            <person name="Benito J."/>
            <person name="Dominguez A."/>
            <person name="Revuelta J.L."/>
            <person name="Moreno S."/>
            <person name="Armstrong J."/>
            <person name="Forsburg S.L."/>
            <person name="Cerutti L."/>
            <person name="Lowe T."/>
            <person name="McCombie W.R."/>
            <person name="Paulsen I."/>
            <person name="Potashkin J."/>
            <person name="Shpakovski G.V."/>
            <person name="Ussery D."/>
            <person name="Barrell B.G."/>
            <person name="Nurse P."/>
        </authorList>
    </citation>
    <scope>NUCLEOTIDE SEQUENCE [LARGE SCALE GENOMIC DNA]</scope>
    <source>
        <strain>972 / ATCC 24843</strain>
    </source>
</reference>
<reference key="2">
    <citation type="journal article" date="2006" name="Nat. Biotechnol.">
        <title>ORFeome cloning and global analysis of protein localization in the fission yeast Schizosaccharomyces pombe.</title>
        <authorList>
            <person name="Matsuyama A."/>
            <person name="Arai R."/>
            <person name="Yashiroda Y."/>
            <person name="Shirai A."/>
            <person name="Kamata A."/>
            <person name="Sekido S."/>
            <person name="Kobayashi Y."/>
            <person name="Hashimoto A."/>
            <person name="Hamamoto M."/>
            <person name="Hiraoka Y."/>
            <person name="Horinouchi S."/>
            <person name="Yoshida M."/>
        </authorList>
    </citation>
    <scope>SUBCELLULAR LOCATION [LARGE SCALE ANALYSIS]</scope>
</reference>
<reference key="3">
    <citation type="journal article" date="2008" name="J. Proteome Res.">
        <title>Phosphoproteome analysis of fission yeast.</title>
        <authorList>
            <person name="Wilson-Grady J.T."/>
            <person name="Villen J."/>
            <person name="Gygi S.P."/>
        </authorList>
    </citation>
    <scope>PHOSPHORYLATION [LARGE SCALE ANALYSIS] AT SER-207 AND SER-308</scope>
    <scope>IDENTIFICATION BY MASS SPECTROMETRY</scope>
</reference>
<proteinExistence type="evidence at protein level"/>
<organism>
    <name type="scientific">Schizosaccharomyces pombe (strain 972 / ATCC 24843)</name>
    <name type="common">Fission yeast</name>
    <dbReference type="NCBI Taxonomy" id="284812"/>
    <lineage>
        <taxon>Eukaryota</taxon>
        <taxon>Fungi</taxon>
        <taxon>Dikarya</taxon>
        <taxon>Ascomycota</taxon>
        <taxon>Taphrinomycotina</taxon>
        <taxon>Schizosaccharomycetes</taxon>
        <taxon>Schizosaccharomycetales</taxon>
        <taxon>Schizosaccharomycetaceae</taxon>
        <taxon>Schizosaccharomyces</taxon>
    </lineage>
</organism>
<protein>
    <recommendedName>
        <fullName>Uncharacterized RNA-binding protein P16F5.06</fullName>
    </recommendedName>
</protein>